<gene>
    <name type="primary">tig</name>
    <name type="ordered locus">jhp_0731</name>
</gene>
<keyword id="KW-0131">Cell cycle</keyword>
<keyword id="KW-0132">Cell division</keyword>
<keyword id="KW-0143">Chaperone</keyword>
<keyword id="KW-0963">Cytoplasm</keyword>
<keyword id="KW-0413">Isomerase</keyword>
<keyword id="KW-0697">Rotamase</keyword>
<comment type="function">
    <text evidence="1">Involved in protein export. Acts as a chaperone by maintaining the newly synthesized protein in an open conformation. Functions as a peptidyl-prolyl cis-trans isomerase (By similarity).</text>
</comment>
<comment type="catalytic activity">
    <reaction>
        <text>[protein]-peptidylproline (omega=180) = [protein]-peptidylproline (omega=0)</text>
        <dbReference type="Rhea" id="RHEA:16237"/>
        <dbReference type="Rhea" id="RHEA-COMP:10747"/>
        <dbReference type="Rhea" id="RHEA-COMP:10748"/>
        <dbReference type="ChEBI" id="CHEBI:83833"/>
        <dbReference type="ChEBI" id="CHEBI:83834"/>
        <dbReference type="EC" id="5.2.1.8"/>
    </reaction>
</comment>
<comment type="subcellular location">
    <subcellularLocation>
        <location>Cytoplasm</location>
    </subcellularLocation>
    <text evidence="1">About half TF is bound to the ribosome near the polypeptide exit tunnel while the other half is free in the cytoplasm.</text>
</comment>
<comment type="domain">
    <text evidence="1">Consists of 3 domains; the N-terminus binds the ribosome, the middle domain has PPIase activity, while the C-terminus has intrinsic chaperone activity on its own.</text>
</comment>
<comment type="similarity">
    <text evidence="2">Belongs to the FKBP-type PPIase family. Tig subfamily.</text>
</comment>
<feature type="chain" id="PRO_0000179364" description="Trigger factor">
    <location>
        <begin position="1"/>
        <end position="451"/>
    </location>
</feature>
<feature type="domain" description="PPIase FKBP-type">
    <location>
        <begin position="165"/>
        <end position="250"/>
    </location>
</feature>
<dbReference type="EC" id="5.2.1.8"/>
<dbReference type="EMBL" id="AE001439">
    <property type="protein sequence ID" value="AAD06304.1"/>
    <property type="molecule type" value="Genomic_DNA"/>
</dbReference>
<dbReference type="PIR" id="A71896">
    <property type="entry name" value="A71896"/>
</dbReference>
<dbReference type="RefSeq" id="WP_001047759.1">
    <property type="nucleotide sequence ID" value="NC_000921.1"/>
</dbReference>
<dbReference type="SMR" id="Q9ZL49"/>
<dbReference type="KEGG" id="hpj:jhp_0731"/>
<dbReference type="PATRIC" id="fig|85963.30.peg.245"/>
<dbReference type="eggNOG" id="COG0544">
    <property type="taxonomic scope" value="Bacteria"/>
</dbReference>
<dbReference type="Proteomes" id="UP000000804">
    <property type="component" value="Chromosome"/>
</dbReference>
<dbReference type="GO" id="GO:0005737">
    <property type="term" value="C:cytoplasm"/>
    <property type="evidence" value="ECO:0007669"/>
    <property type="project" value="UniProtKB-SubCell"/>
</dbReference>
<dbReference type="GO" id="GO:0003755">
    <property type="term" value="F:peptidyl-prolyl cis-trans isomerase activity"/>
    <property type="evidence" value="ECO:0007669"/>
    <property type="project" value="UniProtKB-UniRule"/>
</dbReference>
<dbReference type="GO" id="GO:0044183">
    <property type="term" value="F:protein folding chaperone"/>
    <property type="evidence" value="ECO:0007669"/>
    <property type="project" value="TreeGrafter"/>
</dbReference>
<dbReference type="GO" id="GO:0043022">
    <property type="term" value="F:ribosome binding"/>
    <property type="evidence" value="ECO:0007669"/>
    <property type="project" value="TreeGrafter"/>
</dbReference>
<dbReference type="GO" id="GO:0051083">
    <property type="term" value="P:'de novo' cotranslational protein folding"/>
    <property type="evidence" value="ECO:0007669"/>
    <property type="project" value="TreeGrafter"/>
</dbReference>
<dbReference type="GO" id="GO:0051301">
    <property type="term" value="P:cell division"/>
    <property type="evidence" value="ECO:0007669"/>
    <property type="project" value="UniProtKB-KW"/>
</dbReference>
<dbReference type="GO" id="GO:0061077">
    <property type="term" value="P:chaperone-mediated protein folding"/>
    <property type="evidence" value="ECO:0007669"/>
    <property type="project" value="TreeGrafter"/>
</dbReference>
<dbReference type="GO" id="GO:0015031">
    <property type="term" value="P:protein transport"/>
    <property type="evidence" value="ECO:0007669"/>
    <property type="project" value="UniProtKB-UniRule"/>
</dbReference>
<dbReference type="GO" id="GO:0043335">
    <property type="term" value="P:protein unfolding"/>
    <property type="evidence" value="ECO:0007669"/>
    <property type="project" value="TreeGrafter"/>
</dbReference>
<dbReference type="FunFam" id="3.10.50.40:FF:000001">
    <property type="entry name" value="Trigger factor"/>
    <property type="match status" value="1"/>
</dbReference>
<dbReference type="Gene3D" id="3.10.50.40">
    <property type="match status" value="1"/>
</dbReference>
<dbReference type="Gene3D" id="3.30.70.1050">
    <property type="entry name" value="Trigger factor ribosome-binding domain"/>
    <property type="match status" value="1"/>
</dbReference>
<dbReference type="Gene3D" id="1.10.3120.10">
    <property type="entry name" value="Trigger factor, C-terminal domain"/>
    <property type="match status" value="1"/>
</dbReference>
<dbReference type="HAMAP" id="MF_00303">
    <property type="entry name" value="Trigger_factor_Tig"/>
    <property type="match status" value="1"/>
</dbReference>
<dbReference type="InterPro" id="IPR046357">
    <property type="entry name" value="PPIase_dom_sf"/>
</dbReference>
<dbReference type="InterPro" id="IPR001179">
    <property type="entry name" value="PPIase_FKBP_dom"/>
</dbReference>
<dbReference type="InterPro" id="IPR005215">
    <property type="entry name" value="Trig_fac"/>
</dbReference>
<dbReference type="InterPro" id="IPR008880">
    <property type="entry name" value="Trigger_fac_C"/>
</dbReference>
<dbReference type="InterPro" id="IPR037041">
    <property type="entry name" value="Trigger_fac_C_sf"/>
</dbReference>
<dbReference type="InterPro" id="IPR008881">
    <property type="entry name" value="Trigger_fac_ribosome-bd_bac"/>
</dbReference>
<dbReference type="InterPro" id="IPR036611">
    <property type="entry name" value="Trigger_fac_ribosome-bd_sf"/>
</dbReference>
<dbReference type="InterPro" id="IPR027304">
    <property type="entry name" value="Trigger_fact/SurA_dom_sf"/>
</dbReference>
<dbReference type="NCBIfam" id="TIGR00115">
    <property type="entry name" value="tig"/>
    <property type="match status" value="1"/>
</dbReference>
<dbReference type="PANTHER" id="PTHR30560">
    <property type="entry name" value="TRIGGER FACTOR CHAPERONE AND PEPTIDYL-PROLYL CIS/TRANS ISOMERASE"/>
    <property type="match status" value="1"/>
</dbReference>
<dbReference type="PANTHER" id="PTHR30560:SF3">
    <property type="entry name" value="TRIGGER FACTOR-LIKE PROTEIN TIG, CHLOROPLASTIC"/>
    <property type="match status" value="1"/>
</dbReference>
<dbReference type="Pfam" id="PF00254">
    <property type="entry name" value="FKBP_C"/>
    <property type="match status" value="1"/>
</dbReference>
<dbReference type="Pfam" id="PF05698">
    <property type="entry name" value="Trigger_C"/>
    <property type="match status" value="1"/>
</dbReference>
<dbReference type="Pfam" id="PF05697">
    <property type="entry name" value="Trigger_N"/>
    <property type="match status" value="1"/>
</dbReference>
<dbReference type="PIRSF" id="PIRSF003095">
    <property type="entry name" value="Trigger_factor"/>
    <property type="match status" value="1"/>
</dbReference>
<dbReference type="SUPFAM" id="SSF54534">
    <property type="entry name" value="FKBP-like"/>
    <property type="match status" value="1"/>
</dbReference>
<dbReference type="SUPFAM" id="SSF109998">
    <property type="entry name" value="Triger factor/SurA peptide-binding domain-like"/>
    <property type="match status" value="1"/>
</dbReference>
<dbReference type="SUPFAM" id="SSF102735">
    <property type="entry name" value="Trigger factor ribosome-binding domain"/>
    <property type="match status" value="1"/>
</dbReference>
<dbReference type="PROSITE" id="PS50059">
    <property type="entry name" value="FKBP_PPIASE"/>
    <property type="match status" value="1"/>
</dbReference>
<name>TIG_HELPJ</name>
<protein>
    <recommendedName>
        <fullName>Trigger factor</fullName>
        <shortName>TF</shortName>
        <ecNumber>5.2.1.8</ecNumber>
    </recommendedName>
    <alternativeName>
        <fullName>PPIase</fullName>
    </alternativeName>
</protein>
<proteinExistence type="inferred from homology"/>
<accession>Q9ZL49</accession>
<reference key="1">
    <citation type="journal article" date="1999" name="Nature">
        <title>Genomic sequence comparison of two unrelated isolates of the human gastric pathogen Helicobacter pylori.</title>
        <authorList>
            <person name="Alm R.A."/>
            <person name="Ling L.-S.L."/>
            <person name="Moir D.T."/>
            <person name="King B.L."/>
            <person name="Brown E.D."/>
            <person name="Doig P.C."/>
            <person name="Smith D.R."/>
            <person name="Noonan B."/>
            <person name="Guild B.C."/>
            <person name="deJonge B.L."/>
            <person name="Carmel G."/>
            <person name="Tummino P.J."/>
            <person name="Caruso A."/>
            <person name="Uria-Nickelsen M."/>
            <person name="Mills D.M."/>
            <person name="Ives C."/>
            <person name="Gibson R."/>
            <person name="Merberg D."/>
            <person name="Mills S.D."/>
            <person name="Jiang Q."/>
            <person name="Taylor D.E."/>
            <person name="Vovis G.F."/>
            <person name="Trust T.J."/>
        </authorList>
    </citation>
    <scope>NUCLEOTIDE SEQUENCE [LARGE SCALE GENOMIC DNA]</scope>
    <source>
        <strain>J99 / ATCC 700824</strain>
    </source>
</reference>
<evidence type="ECO:0000250" key="1"/>
<evidence type="ECO:0000305" key="2"/>
<sequence>MNLEVKKIDTANARLSAKPSIEDLEKRYDKIAQKIAQKVKIDGFRRGKVPLSLVKTRYQAQIEQDAQEEMIQEVLKNALKELGVETKDLIGSPNFTKFEKKDTHFEIEADIGLKPTIVLDKIQECVPSVGVEVPNEEKVNERLKQLAKDYAKFVDTDSQRKAQNDDKLTIDFEGFIDNAPFEGGKAENFSLILGSKQMLEDFEKALLGMQASEEKEFPLTFPSGYHAEHLAGKEALFKVKLRQIQVREALEINDELAKIVLANEENATLELLKERVKGQLFLENKARLYNEELKEKLIENLDEKILFDLPKTIIEQEMDLLFRNALYSMQAEEVKSLQDSQEKAKEKRESFRNDATKSVKITFVIDALAKEEKIGVHDNEVFQTLYYEAMMTGQNPENLIEQYRKNNMLAAVKMAMIEDRVLAYLLDKNLPKEQQEILEKMRPNAQKTQVG</sequence>
<organism>
    <name type="scientific">Helicobacter pylori (strain J99 / ATCC 700824)</name>
    <name type="common">Campylobacter pylori J99</name>
    <dbReference type="NCBI Taxonomy" id="85963"/>
    <lineage>
        <taxon>Bacteria</taxon>
        <taxon>Pseudomonadati</taxon>
        <taxon>Campylobacterota</taxon>
        <taxon>Epsilonproteobacteria</taxon>
        <taxon>Campylobacterales</taxon>
        <taxon>Helicobacteraceae</taxon>
        <taxon>Helicobacter</taxon>
    </lineage>
</organism>